<proteinExistence type="inferred from homology"/>
<feature type="initiator methionine" description="Removed" evidence="1">
    <location>
        <position position="1"/>
    </location>
</feature>
<feature type="chain" id="PRO_0000071879" description="Histone H2B.1/H2B.2">
    <location>
        <begin position="2"/>
        <end position="123"/>
    </location>
</feature>
<feature type="region of interest" description="Disordered" evidence="2">
    <location>
        <begin position="1"/>
        <end position="30"/>
    </location>
</feature>
<feature type="glycosylation site" description="O-linked (GlcNAc) serine" evidence="1">
    <location>
        <position position="110"/>
    </location>
</feature>
<feature type="cross-link" description="Glycyl lysine isopeptide (Lys-Gly) (interchain with G-Cter in ubiquitin)" evidence="1">
    <location>
        <position position="118"/>
    </location>
</feature>
<evidence type="ECO:0000250" key="1"/>
<evidence type="ECO:0000256" key="2">
    <source>
        <dbReference type="SAM" id="MobiDB-lite"/>
    </source>
</evidence>
<evidence type="ECO:0000305" key="3"/>
<protein>
    <recommendedName>
        <fullName>Histone H2B.1/H2B.2</fullName>
    </recommendedName>
</protein>
<organism>
    <name type="scientific">Tigriopus californicus</name>
    <name type="common">Marine copepod</name>
    <dbReference type="NCBI Taxonomy" id="6832"/>
    <lineage>
        <taxon>Eukaryota</taxon>
        <taxon>Metazoa</taxon>
        <taxon>Ecdysozoa</taxon>
        <taxon>Arthropoda</taxon>
        <taxon>Crustacea</taxon>
        <taxon>Multicrustacea</taxon>
        <taxon>Hexanauplia</taxon>
        <taxon>Copepoda</taxon>
        <taxon>Harpacticoida</taxon>
        <taxon>Harpacticidae</taxon>
        <taxon>Tigriopus</taxon>
    </lineage>
</organism>
<comment type="function">
    <text>Core component of nucleosome. Nucleosomes wrap and compact DNA into chromatin, limiting DNA accessibility to the cellular machineries which require DNA as a template. Histones thereby play a central role in transcription regulation, DNA repair, DNA replication and chromosomal stability. DNA accessibility is regulated via a complex set of post-translational modifications of histones, also called histone code, and nucleosome remodeling.</text>
</comment>
<comment type="subunit">
    <text>The nucleosome is a histone octamer containing two molecules each of H2A, H2B, H3 and H4 assembled in one H3-H4 heterotetramer and two H2A-H2B heterodimers. The octamer wraps approximately 147 bp of DNA.</text>
</comment>
<comment type="subcellular location">
    <subcellularLocation>
        <location>Nucleus</location>
    </subcellularLocation>
    <subcellularLocation>
        <location>Chromosome</location>
    </subcellularLocation>
</comment>
<comment type="PTM">
    <text evidence="1">Monoubiquitination of Lys-118 gives a specific tag for epigenetic transcriptional activation and is also prerequisite for histone H3 'Lys-4' and 'Lys-79' methylation.</text>
</comment>
<comment type="PTM">
    <text evidence="1">GlcNAcylation at Ser-110 promotes monoubiquitination of Lys-118. It fluctuates in response to extracellular glucose, and associates with transcribed genes (By similarity).</text>
</comment>
<comment type="similarity">
    <text evidence="3">Belongs to the histone H2B family.</text>
</comment>
<sequence length="123" mass="13652">MPPKVSGKAAKKAGKAQKNITKGDKKKNRKRKESYAIYIYKVLKQVHPDTGISSKAMSIMNSFVNDIFERIASEASRLAHYNKRSTITSREIQTAVRLLLPGELAKHAVSEGTKAVTKYTSSK</sequence>
<accession>P35068</accession>
<dbReference type="EMBL" id="S49144">
    <property type="protein sequence ID" value="AAA12277.1"/>
    <property type="molecule type" value="Genomic_DNA"/>
</dbReference>
<dbReference type="EMBL" id="M84797">
    <property type="protein sequence ID" value="AAC41554.1"/>
    <property type="molecule type" value="Genomic_DNA"/>
</dbReference>
<dbReference type="EMBL" id="M84798">
    <property type="protein sequence ID" value="AAC41556.1"/>
    <property type="molecule type" value="Genomic_DNA"/>
</dbReference>
<dbReference type="PIR" id="B56612">
    <property type="entry name" value="B56612"/>
</dbReference>
<dbReference type="RefSeq" id="XP_059078530.1">
    <property type="nucleotide sequence ID" value="XM_059222547.1"/>
</dbReference>
<dbReference type="RefSeq" id="XP_059088694.1">
    <property type="nucleotide sequence ID" value="XM_059232711.1"/>
</dbReference>
<dbReference type="SMR" id="P35068"/>
<dbReference type="EnsemblMetazoa" id="TCAL_13517-PA_mrna">
    <property type="protein sequence ID" value="TRY69113.1"/>
    <property type="gene ID" value="TCAL_13517"/>
</dbReference>
<dbReference type="GeneID" id="131876990"/>
<dbReference type="GeneID" id="131884824"/>
<dbReference type="OMA" id="LLXGELA"/>
<dbReference type="OrthoDB" id="6351868at2759"/>
<dbReference type="GO" id="GO:0000786">
    <property type="term" value="C:nucleosome"/>
    <property type="evidence" value="ECO:0007669"/>
    <property type="project" value="UniProtKB-KW"/>
</dbReference>
<dbReference type="GO" id="GO:0005634">
    <property type="term" value="C:nucleus"/>
    <property type="evidence" value="ECO:0007669"/>
    <property type="project" value="UniProtKB-SubCell"/>
</dbReference>
<dbReference type="GO" id="GO:0003677">
    <property type="term" value="F:DNA binding"/>
    <property type="evidence" value="ECO:0007669"/>
    <property type="project" value="UniProtKB-KW"/>
</dbReference>
<dbReference type="GO" id="GO:0046982">
    <property type="term" value="F:protein heterodimerization activity"/>
    <property type="evidence" value="ECO:0007669"/>
    <property type="project" value="InterPro"/>
</dbReference>
<dbReference type="GO" id="GO:0044877">
    <property type="term" value="F:protein-containing complex binding"/>
    <property type="evidence" value="ECO:0000250"/>
    <property type="project" value="UniProtKB"/>
</dbReference>
<dbReference type="GO" id="GO:0030527">
    <property type="term" value="F:structural constituent of chromatin"/>
    <property type="evidence" value="ECO:0007669"/>
    <property type="project" value="InterPro"/>
</dbReference>
<dbReference type="CDD" id="cd22910">
    <property type="entry name" value="HFD_H2B"/>
    <property type="match status" value="1"/>
</dbReference>
<dbReference type="FunFam" id="1.10.20.10:FF:000016">
    <property type="entry name" value="Histone H2B"/>
    <property type="match status" value="1"/>
</dbReference>
<dbReference type="Gene3D" id="1.10.20.10">
    <property type="entry name" value="Histone, subunit A"/>
    <property type="match status" value="1"/>
</dbReference>
<dbReference type="InterPro" id="IPR009072">
    <property type="entry name" value="Histone-fold"/>
</dbReference>
<dbReference type="InterPro" id="IPR007125">
    <property type="entry name" value="Histone_H2A/H2B/H3"/>
</dbReference>
<dbReference type="InterPro" id="IPR000558">
    <property type="entry name" value="Histone_H2B"/>
</dbReference>
<dbReference type="InterPro" id="IPR055333">
    <property type="entry name" value="HISTONE_H2B_site"/>
</dbReference>
<dbReference type="PANTHER" id="PTHR23428">
    <property type="entry name" value="HISTONE H2B"/>
    <property type="match status" value="1"/>
</dbReference>
<dbReference type="Pfam" id="PF00125">
    <property type="entry name" value="Histone"/>
    <property type="match status" value="1"/>
</dbReference>
<dbReference type="PRINTS" id="PR00621">
    <property type="entry name" value="HISTONEH2B"/>
</dbReference>
<dbReference type="SMART" id="SM00427">
    <property type="entry name" value="H2B"/>
    <property type="match status" value="1"/>
</dbReference>
<dbReference type="SUPFAM" id="SSF47113">
    <property type="entry name" value="Histone-fold"/>
    <property type="match status" value="1"/>
</dbReference>
<dbReference type="PROSITE" id="PS00357">
    <property type="entry name" value="HISTONE_H2B"/>
    <property type="match status" value="1"/>
</dbReference>
<reference key="1">
    <citation type="journal article" date="1992" name="DNA Seq.">
        <title>Closely linked H2B genes in the marine copepod, Tigriopus californicus indicate a recent gene duplication or gene conversion event.</title>
        <authorList>
            <person name="Brown D."/>
            <person name="Cook A."/>
            <person name="Wagner M."/>
            <person name="Wells D."/>
        </authorList>
    </citation>
    <scope>NUCLEOTIDE SEQUENCE [GENOMIC DNA]</scope>
</reference>
<name>H2B1_TIGCA</name>
<keyword id="KW-0158">Chromosome</keyword>
<keyword id="KW-0238">DNA-binding</keyword>
<keyword id="KW-0325">Glycoprotein</keyword>
<keyword id="KW-1017">Isopeptide bond</keyword>
<keyword id="KW-0544">Nucleosome core</keyword>
<keyword id="KW-0539">Nucleus</keyword>
<keyword id="KW-0832">Ubl conjugation</keyword>